<keyword id="KW-0997">Cell inner membrane</keyword>
<keyword id="KW-1003">Cell membrane</keyword>
<keyword id="KW-0285">Flavoprotein</keyword>
<keyword id="KW-0288">FMN</keyword>
<keyword id="KW-0472">Membrane</keyword>
<keyword id="KW-0560">Oxidoreductase</keyword>
<keyword id="KW-1185">Reference proteome</keyword>
<protein>
    <recommendedName>
        <fullName evidence="1">L-lactate dehydrogenase</fullName>
        <ecNumber evidence="1">1.1.-.-</ecNumber>
    </recommendedName>
</protein>
<proteinExistence type="inferred from homology"/>
<feature type="chain" id="PRO_0000383448" description="L-lactate dehydrogenase">
    <location>
        <begin position="1"/>
        <end position="396"/>
    </location>
</feature>
<feature type="domain" description="FMN hydroxy acid dehydrogenase" evidence="1">
    <location>
        <begin position="1"/>
        <end position="380"/>
    </location>
</feature>
<feature type="active site" description="Proton acceptor" evidence="1">
    <location>
        <position position="275"/>
    </location>
</feature>
<feature type="binding site" evidence="1">
    <location>
        <position position="24"/>
    </location>
    <ligand>
        <name>substrate</name>
    </ligand>
</feature>
<feature type="binding site" evidence="1">
    <location>
        <position position="106"/>
    </location>
    <ligand>
        <name>FMN</name>
        <dbReference type="ChEBI" id="CHEBI:58210"/>
    </ligand>
</feature>
<feature type="binding site" evidence="1">
    <location>
        <position position="127"/>
    </location>
    <ligand>
        <name>FMN</name>
        <dbReference type="ChEBI" id="CHEBI:58210"/>
    </ligand>
</feature>
<feature type="binding site" evidence="1">
    <location>
        <position position="129"/>
    </location>
    <ligand>
        <name>substrate</name>
    </ligand>
</feature>
<feature type="binding site" evidence="1">
    <location>
        <position position="155"/>
    </location>
    <ligand>
        <name>FMN</name>
        <dbReference type="ChEBI" id="CHEBI:58210"/>
    </ligand>
</feature>
<feature type="binding site" evidence="1">
    <location>
        <position position="164"/>
    </location>
    <ligand>
        <name>substrate</name>
    </ligand>
</feature>
<feature type="binding site" evidence="1">
    <location>
        <position position="251"/>
    </location>
    <ligand>
        <name>FMN</name>
        <dbReference type="ChEBI" id="CHEBI:58210"/>
    </ligand>
</feature>
<feature type="binding site" evidence="1">
    <location>
        <position position="278"/>
    </location>
    <ligand>
        <name>substrate</name>
    </ligand>
</feature>
<feature type="binding site" evidence="1">
    <location>
        <begin position="306"/>
        <end position="330"/>
    </location>
    <ligand>
        <name>FMN</name>
        <dbReference type="ChEBI" id="CHEBI:58210"/>
    </ligand>
</feature>
<dbReference type="EC" id="1.1.-.-" evidence="1"/>
<dbReference type="EMBL" id="CP001063">
    <property type="protein sequence ID" value="ACD10439.1"/>
    <property type="molecule type" value="Genomic_DNA"/>
</dbReference>
<dbReference type="RefSeq" id="WP_000586962.1">
    <property type="nucleotide sequence ID" value="NC_010658.1"/>
</dbReference>
<dbReference type="SMR" id="B2U5C2"/>
<dbReference type="STRING" id="344609.SbBS512_E4031"/>
<dbReference type="KEGG" id="sbc:SbBS512_E4031"/>
<dbReference type="HOGENOM" id="CLU_020639_0_0_6"/>
<dbReference type="Proteomes" id="UP000001030">
    <property type="component" value="Chromosome"/>
</dbReference>
<dbReference type="GO" id="GO:0005886">
    <property type="term" value="C:plasma membrane"/>
    <property type="evidence" value="ECO:0007669"/>
    <property type="project" value="UniProtKB-SubCell"/>
</dbReference>
<dbReference type="GO" id="GO:0010181">
    <property type="term" value="F:FMN binding"/>
    <property type="evidence" value="ECO:0007669"/>
    <property type="project" value="InterPro"/>
</dbReference>
<dbReference type="GO" id="GO:0004459">
    <property type="term" value="F:L-lactate dehydrogenase activity"/>
    <property type="evidence" value="ECO:0007669"/>
    <property type="project" value="UniProtKB-UniRule"/>
</dbReference>
<dbReference type="GO" id="GO:0009060">
    <property type="term" value="P:aerobic respiration"/>
    <property type="evidence" value="ECO:0007669"/>
    <property type="project" value="TreeGrafter"/>
</dbReference>
<dbReference type="GO" id="GO:0006089">
    <property type="term" value="P:lactate metabolic process"/>
    <property type="evidence" value="ECO:0007669"/>
    <property type="project" value="UniProtKB-UniRule"/>
</dbReference>
<dbReference type="CDD" id="cd02809">
    <property type="entry name" value="alpha_hydroxyacid_oxid_FMN"/>
    <property type="match status" value="1"/>
</dbReference>
<dbReference type="FunFam" id="3.20.20.70:FF:000029">
    <property type="entry name" value="L-lactate dehydrogenase"/>
    <property type="match status" value="1"/>
</dbReference>
<dbReference type="Gene3D" id="3.20.20.70">
    <property type="entry name" value="Aldolase class I"/>
    <property type="match status" value="1"/>
</dbReference>
<dbReference type="HAMAP" id="MF_01559">
    <property type="entry name" value="L_lact_dehydr"/>
    <property type="match status" value="1"/>
</dbReference>
<dbReference type="InterPro" id="IPR013785">
    <property type="entry name" value="Aldolase_TIM"/>
</dbReference>
<dbReference type="InterPro" id="IPR012133">
    <property type="entry name" value="Alpha-hydoxy_acid_DH_FMN"/>
</dbReference>
<dbReference type="InterPro" id="IPR000262">
    <property type="entry name" value="FMN-dep_DH"/>
</dbReference>
<dbReference type="InterPro" id="IPR037396">
    <property type="entry name" value="FMN_HAD"/>
</dbReference>
<dbReference type="InterPro" id="IPR008259">
    <property type="entry name" value="FMN_hydac_DH_AS"/>
</dbReference>
<dbReference type="InterPro" id="IPR020920">
    <property type="entry name" value="LldD"/>
</dbReference>
<dbReference type="NCBIfam" id="NF033901">
    <property type="entry name" value="L_lactate_LldD"/>
    <property type="match status" value="1"/>
</dbReference>
<dbReference type="NCBIfam" id="NF008398">
    <property type="entry name" value="PRK11197.1"/>
    <property type="match status" value="1"/>
</dbReference>
<dbReference type="PANTHER" id="PTHR10578:SF85">
    <property type="entry name" value="L-LACTATE DEHYDROGENASE"/>
    <property type="match status" value="1"/>
</dbReference>
<dbReference type="PANTHER" id="PTHR10578">
    <property type="entry name" value="S -2-HYDROXY-ACID OXIDASE-RELATED"/>
    <property type="match status" value="1"/>
</dbReference>
<dbReference type="Pfam" id="PF01070">
    <property type="entry name" value="FMN_dh"/>
    <property type="match status" value="1"/>
</dbReference>
<dbReference type="PIRSF" id="PIRSF000138">
    <property type="entry name" value="Al-hdrx_acd_dh"/>
    <property type="match status" value="1"/>
</dbReference>
<dbReference type="SUPFAM" id="SSF51395">
    <property type="entry name" value="FMN-linked oxidoreductases"/>
    <property type="match status" value="1"/>
</dbReference>
<dbReference type="PROSITE" id="PS00557">
    <property type="entry name" value="FMN_HYDROXY_ACID_DH_1"/>
    <property type="match status" value="1"/>
</dbReference>
<dbReference type="PROSITE" id="PS51349">
    <property type="entry name" value="FMN_HYDROXY_ACID_DH_2"/>
    <property type="match status" value="1"/>
</dbReference>
<evidence type="ECO:0000255" key="1">
    <source>
        <dbReference type="HAMAP-Rule" id="MF_01559"/>
    </source>
</evidence>
<reference key="1">
    <citation type="submission" date="2008-05" db="EMBL/GenBank/DDBJ databases">
        <title>Complete sequence of Shigella boydii serotype 18 strain BS512.</title>
        <authorList>
            <person name="Rasko D.A."/>
            <person name="Rosovitz M."/>
            <person name="Maurelli A.T."/>
            <person name="Myers G."/>
            <person name="Seshadri R."/>
            <person name="Cer R."/>
            <person name="Jiang L."/>
            <person name="Ravel J."/>
            <person name="Sebastian Y."/>
        </authorList>
    </citation>
    <scope>NUCLEOTIDE SEQUENCE [LARGE SCALE GENOMIC DNA]</scope>
    <source>
        <strain>CDC 3083-94 / BS512</strain>
    </source>
</reference>
<accession>B2U5C2</accession>
<sequence>MIISAASDYRAAAQRILPPFLFHYMDGGAYSEYTLRRNVEDLSEVALRQRILKNMSDLSLETTLFNEKLSMPVALAPVGLCGMYARRGEVQAAKAADAHGIPFTLSTVSVCPIEEVAPAIKRPMWFQLYVLRDRGFMRNALERAKAAGCSTLVFTVDMPTPGARYRDAHSGMSGPNAAMRRYLQAVTHPQWAWDVGLNGRPHDLGNISAYLGKPTGLEDYIGWLGNNFDPSISWKDLEWIRDFWDGPMVIKGILDPEDARDAVRFGADGIVVSNHGGRQLDGVLSSARALPAIADAVKGDIAILADSGIRNGLDVVRMIALGADTVLLGRAFLYALATAGQAGVANLLNLIEKEMKVAMTLTGAKSISEITQDSLVQGLGKELPAALAPMAKGNAA</sequence>
<comment type="function">
    <text evidence="1">Catalyzes the conversion of L-lactate to pyruvate. Is coupled to the respiratory chain.</text>
</comment>
<comment type="catalytic activity">
    <reaction evidence="1">
        <text>(S)-lactate + A = pyruvate + AH2</text>
        <dbReference type="Rhea" id="RHEA:45816"/>
        <dbReference type="ChEBI" id="CHEBI:13193"/>
        <dbReference type="ChEBI" id="CHEBI:15361"/>
        <dbReference type="ChEBI" id="CHEBI:16651"/>
        <dbReference type="ChEBI" id="CHEBI:17499"/>
    </reaction>
</comment>
<comment type="cofactor">
    <cofactor evidence="1">
        <name>FMN</name>
        <dbReference type="ChEBI" id="CHEBI:58210"/>
    </cofactor>
</comment>
<comment type="subcellular location">
    <subcellularLocation>
        <location evidence="1">Cell inner membrane</location>
        <topology evidence="1">Peripheral membrane protein</topology>
    </subcellularLocation>
</comment>
<comment type="similarity">
    <text evidence="1">Belongs to the FMN-dependent alpha-hydroxy acid dehydrogenase family.</text>
</comment>
<organism>
    <name type="scientific">Shigella boydii serotype 18 (strain CDC 3083-94 / BS512)</name>
    <dbReference type="NCBI Taxonomy" id="344609"/>
    <lineage>
        <taxon>Bacteria</taxon>
        <taxon>Pseudomonadati</taxon>
        <taxon>Pseudomonadota</taxon>
        <taxon>Gammaproteobacteria</taxon>
        <taxon>Enterobacterales</taxon>
        <taxon>Enterobacteriaceae</taxon>
        <taxon>Shigella</taxon>
    </lineage>
</organism>
<gene>
    <name evidence="1" type="primary">lldD</name>
    <name type="ordered locus">SbBS512_E4031</name>
</gene>
<name>LLDD_SHIB3</name>